<reference key="1">
    <citation type="journal article" date="2008" name="J. Bacteriol.">
        <title>Insights into the environmental resistance gene pool from the genome sequence of the multidrug-resistant environmental isolate Escherichia coli SMS-3-5.</title>
        <authorList>
            <person name="Fricke W.F."/>
            <person name="Wright M.S."/>
            <person name="Lindell A.H."/>
            <person name="Harkins D.M."/>
            <person name="Baker-Austin C."/>
            <person name="Ravel J."/>
            <person name="Stepanauskas R."/>
        </authorList>
    </citation>
    <scope>NUCLEOTIDE SEQUENCE [LARGE SCALE GENOMIC DNA]</scope>
    <source>
        <strain>SMS-3-5 / SECEC</strain>
    </source>
</reference>
<comment type="function">
    <text evidence="1">Specifically dimethylates two adjacent adenosines (A1518 and A1519) in the loop of a conserved hairpin near the 3'-end of 16S rRNA in the 30S particle. May play a critical role in biogenesis of 30S subunits.</text>
</comment>
<comment type="catalytic activity">
    <reaction evidence="1">
        <text>adenosine(1518)/adenosine(1519) in 16S rRNA + 4 S-adenosyl-L-methionine = N(6)-dimethyladenosine(1518)/N(6)-dimethyladenosine(1519) in 16S rRNA + 4 S-adenosyl-L-homocysteine + 4 H(+)</text>
        <dbReference type="Rhea" id="RHEA:19609"/>
        <dbReference type="Rhea" id="RHEA-COMP:10232"/>
        <dbReference type="Rhea" id="RHEA-COMP:10233"/>
        <dbReference type="ChEBI" id="CHEBI:15378"/>
        <dbReference type="ChEBI" id="CHEBI:57856"/>
        <dbReference type="ChEBI" id="CHEBI:59789"/>
        <dbReference type="ChEBI" id="CHEBI:74411"/>
        <dbReference type="ChEBI" id="CHEBI:74493"/>
        <dbReference type="EC" id="2.1.1.182"/>
    </reaction>
</comment>
<comment type="subcellular location">
    <subcellularLocation>
        <location evidence="1">Cytoplasm</location>
    </subcellularLocation>
</comment>
<comment type="similarity">
    <text evidence="1">Belongs to the class I-like SAM-binding methyltransferase superfamily. rRNA adenine N(6)-methyltransferase family. RsmA subfamily.</text>
</comment>
<dbReference type="EC" id="2.1.1.182" evidence="1"/>
<dbReference type="EMBL" id="CP000970">
    <property type="protein sequence ID" value="ACB19151.1"/>
    <property type="molecule type" value="Genomic_DNA"/>
</dbReference>
<dbReference type="RefSeq" id="WP_001065381.1">
    <property type="nucleotide sequence ID" value="NC_010498.1"/>
</dbReference>
<dbReference type="SMR" id="B1LFY7"/>
<dbReference type="GeneID" id="93777384"/>
<dbReference type="KEGG" id="ecm:EcSMS35_0055"/>
<dbReference type="HOGENOM" id="CLU_041220_0_1_6"/>
<dbReference type="Proteomes" id="UP000007011">
    <property type="component" value="Chromosome"/>
</dbReference>
<dbReference type="GO" id="GO:0005829">
    <property type="term" value="C:cytosol"/>
    <property type="evidence" value="ECO:0007669"/>
    <property type="project" value="TreeGrafter"/>
</dbReference>
<dbReference type="GO" id="GO:0052908">
    <property type="term" value="F:16S rRNA (adenine(1518)-N(6)/adenine(1519)-N(6))-dimethyltransferase activity"/>
    <property type="evidence" value="ECO:0007669"/>
    <property type="project" value="UniProtKB-EC"/>
</dbReference>
<dbReference type="GO" id="GO:0003723">
    <property type="term" value="F:RNA binding"/>
    <property type="evidence" value="ECO:0007669"/>
    <property type="project" value="UniProtKB-KW"/>
</dbReference>
<dbReference type="FunFam" id="1.10.8.100:FF:000001">
    <property type="entry name" value="Ribosomal RNA small subunit methyltransferase A"/>
    <property type="match status" value="1"/>
</dbReference>
<dbReference type="FunFam" id="3.40.50.150:FF:000006">
    <property type="entry name" value="Ribosomal RNA small subunit methyltransferase A"/>
    <property type="match status" value="1"/>
</dbReference>
<dbReference type="Gene3D" id="1.10.8.100">
    <property type="entry name" value="Ribosomal RNA adenine dimethylase-like, domain 2"/>
    <property type="match status" value="1"/>
</dbReference>
<dbReference type="Gene3D" id="3.40.50.150">
    <property type="entry name" value="Vaccinia Virus protein VP39"/>
    <property type="match status" value="1"/>
</dbReference>
<dbReference type="HAMAP" id="MF_00607">
    <property type="entry name" value="16SrRNA_methyltr_A"/>
    <property type="match status" value="1"/>
</dbReference>
<dbReference type="InterPro" id="IPR001737">
    <property type="entry name" value="KsgA/Erm"/>
</dbReference>
<dbReference type="InterPro" id="IPR023165">
    <property type="entry name" value="rRNA_Ade_diMease-like_C"/>
</dbReference>
<dbReference type="InterPro" id="IPR020596">
    <property type="entry name" value="rRNA_Ade_Mease_Trfase_CS"/>
</dbReference>
<dbReference type="InterPro" id="IPR020598">
    <property type="entry name" value="rRNA_Ade_methylase_Trfase_N"/>
</dbReference>
<dbReference type="InterPro" id="IPR011530">
    <property type="entry name" value="rRNA_adenine_dimethylase"/>
</dbReference>
<dbReference type="InterPro" id="IPR029063">
    <property type="entry name" value="SAM-dependent_MTases_sf"/>
</dbReference>
<dbReference type="NCBIfam" id="TIGR00755">
    <property type="entry name" value="ksgA"/>
    <property type="match status" value="1"/>
</dbReference>
<dbReference type="PANTHER" id="PTHR11727">
    <property type="entry name" value="DIMETHYLADENOSINE TRANSFERASE"/>
    <property type="match status" value="1"/>
</dbReference>
<dbReference type="PANTHER" id="PTHR11727:SF7">
    <property type="entry name" value="DIMETHYLADENOSINE TRANSFERASE-RELATED"/>
    <property type="match status" value="1"/>
</dbReference>
<dbReference type="Pfam" id="PF00398">
    <property type="entry name" value="RrnaAD"/>
    <property type="match status" value="1"/>
</dbReference>
<dbReference type="SMART" id="SM00650">
    <property type="entry name" value="rADc"/>
    <property type="match status" value="1"/>
</dbReference>
<dbReference type="SUPFAM" id="SSF53335">
    <property type="entry name" value="S-adenosyl-L-methionine-dependent methyltransferases"/>
    <property type="match status" value="1"/>
</dbReference>
<dbReference type="PROSITE" id="PS01131">
    <property type="entry name" value="RRNA_A_DIMETH"/>
    <property type="match status" value="1"/>
</dbReference>
<dbReference type="PROSITE" id="PS51689">
    <property type="entry name" value="SAM_RNA_A_N6_MT"/>
    <property type="match status" value="1"/>
</dbReference>
<protein>
    <recommendedName>
        <fullName evidence="1">Ribosomal RNA small subunit methyltransferase A</fullName>
        <ecNumber evidence="1">2.1.1.182</ecNumber>
    </recommendedName>
    <alternativeName>
        <fullName evidence="1">16S rRNA (adenine(1518)-N(6)/adenine(1519)-N(6))-dimethyltransferase</fullName>
    </alternativeName>
    <alternativeName>
        <fullName evidence="1">16S rRNA dimethyladenosine transferase</fullName>
    </alternativeName>
    <alternativeName>
        <fullName evidence="1">16S rRNA dimethylase</fullName>
    </alternativeName>
    <alternativeName>
        <fullName evidence="1">S-adenosylmethionine-6-N', N'-adenosyl(rRNA) dimethyltransferase</fullName>
    </alternativeName>
</protein>
<evidence type="ECO:0000255" key="1">
    <source>
        <dbReference type="HAMAP-Rule" id="MF_00607"/>
    </source>
</evidence>
<gene>
    <name evidence="1" type="primary">rsmA</name>
    <name evidence="1" type="synonym">ksgA</name>
    <name type="ordered locus">EcSMS35_0055</name>
</gene>
<accession>B1LFY7</accession>
<name>RSMA_ECOSM</name>
<keyword id="KW-0963">Cytoplasm</keyword>
<keyword id="KW-0489">Methyltransferase</keyword>
<keyword id="KW-0694">RNA-binding</keyword>
<keyword id="KW-0698">rRNA processing</keyword>
<keyword id="KW-0949">S-adenosyl-L-methionine</keyword>
<keyword id="KW-0808">Transferase</keyword>
<organism>
    <name type="scientific">Escherichia coli (strain SMS-3-5 / SECEC)</name>
    <dbReference type="NCBI Taxonomy" id="439855"/>
    <lineage>
        <taxon>Bacteria</taxon>
        <taxon>Pseudomonadati</taxon>
        <taxon>Pseudomonadota</taxon>
        <taxon>Gammaproteobacteria</taxon>
        <taxon>Enterobacterales</taxon>
        <taxon>Enterobacteriaceae</taxon>
        <taxon>Escherichia</taxon>
    </lineage>
</organism>
<sequence>MNNRVHQGHLARKRFGQNFLNDQFVIDSIVSAINPQKGQAMVEIGPGLAALTEPVGERLDQLTVIELDRDLAARLQTHPFLGPKLTIYQQDAMTFNFGELAEKMGQPLRVFGNLPYNISTPLMFHLFSYTDAIADMHFMLQKEVVNRLVAGPNSKAYGRLSVMAQYYCNVIPVLEVPPSAFTPPPKVDSAVVRLVPHATMPHPVKDVRVLSRITTEAFNQRRKTIRNSLGNLFSVEVLTGMGIDPAMRAENISVAQYCQMANYLAENAPLQES</sequence>
<feature type="chain" id="PRO_1000130276" description="Ribosomal RNA small subunit methyltransferase A">
    <location>
        <begin position="1"/>
        <end position="273"/>
    </location>
</feature>
<feature type="binding site" evidence="1">
    <location>
        <position position="18"/>
    </location>
    <ligand>
        <name>S-adenosyl-L-methionine</name>
        <dbReference type="ChEBI" id="CHEBI:59789"/>
    </ligand>
</feature>
<feature type="binding site" evidence="1">
    <location>
        <position position="20"/>
    </location>
    <ligand>
        <name>S-adenosyl-L-methionine</name>
        <dbReference type="ChEBI" id="CHEBI:59789"/>
    </ligand>
</feature>
<feature type="binding site" evidence="1">
    <location>
        <position position="45"/>
    </location>
    <ligand>
        <name>S-adenosyl-L-methionine</name>
        <dbReference type="ChEBI" id="CHEBI:59789"/>
    </ligand>
</feature>
<feature type="binding site" evidence="1">
    <location>
        <position position="66"/>
    </location>
    <ligand>
        <name>S-adenosyl-L-methionine</name>
        <dbReference type="ChEBI" id="CHEBI:59789"/>
    </ligand>
</feature>
<feature type="binding site" evidence="1">
    <location>
        <position position="91"/>
    </location>
    <ligand>
        <name>S-adenosyl-L-methionine</name>
        <dbReference type="ChEBI" id="CHEBI:59789"/>
    </ligand>
</feature>
<feature type="binding site" evidence="1">
    <location>
        <position position="113"/>
    </location>
    <ligand>
        <name>S-adenosyl-L-methionine</name>
        <dbReference type="ChEBI" id="CHEBI:59789"/>
    </ligand>
</feature>
<proteinExistence type="inferred from homology"/>